<protein>
    <recommendedName>
        <fullName evidence="1">Proline--tRNA ligase</fullName>
        <ecNumber evidence="1">6.1.1.15</ecNumber>
    </recommendedName>
    <alternativeName>
        <fullName evidence="1">Prolyl-tRNA synthetase</fullName>
        <shortName evidence="1">ProRS</shortName>
    </alternativeName>
</protein>
<name>SYP_CLOB8</name>
<keyword id="KW-0030">Aminoacyl-tRNA synthetase</keyword>
<keyword id="KW-0067">ATP-binding</keyword>
<keyword id="KW-0963">Cytoplasm</keyword>
<keyword id="KW-0436">Ligase</keyword>
<keyword id="KW-0547">Nucleotide-binding</keyword>
<keyword id="KW-0648">Protein biosynthesis</keyword>
<evidence type="ECO:0000255" key="1">
    <source>
        <dbReference type="HAMAP-Rule" id="MF_01569"/>
    </source>
</evidence>
<accession>A6LPP0</accession>
<sequence>MKMSNMLISTLREVPAEAEIDSHKLMLRAGMIRKMAAGVYNYMPLGLKVLKKVEDIIREEMNAAGAQEFLASAIIPAELWQESGRWDAYGAEMFRLKDRGDRDFCLGPTHEEVFTDIARNEIKSYKQLPLNLYQIQTKYRDERRPRFGVMRSREFVMKDAYSFDKDQGGLDLAYDKMHDAYVKIFNRCGLDAKCVAADSGAIGGSNSAEFMVKSEVGEDDVVFCSECNYAANIEKASSPAEKELKQEFKEINKVETPNTKTIDELVKFFGTNEKKFAKTILFNADGKIVAVMVRGDREINEVKVSNAIGEVINLELASSEDVKKATGAEIGFAGPIGIKVDMLLVDEEVANMYNFIVGANETGYHINNVNYGRDFEGVIGDYRNVTEGEKCPVCGGKVTIARGTEVGHIFKLGTKYSEAMNAKFIDEDGKEKPFIMGCYGIGVTRTMASIIEQHHDENGIVWPLSVAPYHVSVIPVNVKDEEQARIANEIYEKLTSAGIEALLDDRNERAGVKFKDSELMGIPMRITVGKKINDGEIEFKLRDGEMEVIKIEDVYNIIKGEFEKNKIKLK</sequence>
<proteinExistence type="inferred from homology"/>
<dbReference type="EC" id="6.1.1.15" evidence="1"/>
<dbReference type="EMBL" id="CP000721">
    <property type="protein sequence ID" value="ABR32320.1"/>
    <property type="molecule type" value="Genomic_DNA"/>
</dbReference>
<dbReference type="RefSeq" id="WP_011967493.1">
    <property type="nucleotide sequence ID" value="NC_009617.1"/>
</dbReference>
<dbReference type="SMR" id="A6LPP0"/>
<dbReference type="KEGG" id="cbe:Cbei_0130"/>
<dbReference type="eggNOG" id="COG0442">
    <property type="taxonomic scope" value="Bacteria"/>
</dbReference>
<dbReference type="HOGENOM" id="CLU_016739_0_0_9"/>
<dbReference type="Proteomes" id="UP000000565">
    <property type="component" value="Chromosome"/>
</dbReference>
<dbReference type="GO" id="GO:0005829">
    <property type="term" value="C:cytosol"/>
    <property type="evidence" value="ECO:0007669"/>
    <property type="project" value="TreeGrafter"/>
</dbReference>
<dbReference type="GO" id="GO:0002161">
    <property type="term" value="F:aminoacyl-tRNA deacylase activity"/>
    <property type="evidence" value="ECO:0007669"/>
    <property type="project" value="InterPro"/>
</dbReference>
<dbReference type="GO" id="GO:0005524">
    <property type="term" value="F:ATP binding"/>
    <property type="evidence" value="ECO:0007669"/>
    <property type="project" value="UniProtKB-UniRule"/>
</dbReference>
<dbReference type="GO" id="GO:0140096">
    <property type="term" value="F:catalytic activity, acting on a protein"/>
    <property type="evidence" value="ECO:0007669"/>
    <property type="project" value="UniProtKB-ARBA"/>
</dbReference>
<dbReference type="GO" id="GO:0004827">
    <property type="term" value="F:proline-tRNA ligase activity"/>
    <property type="evidence" value="ECO:0007669"/>
    <property type="project" value="UniProtKB-UniRule"/>
</dbReference>
<dbReference type="GO" id="GO:0016740">
    <property type="term" value="F:transferase activity"/>
    <property type="evidence" value="ECO:0007669"/>
    <property type="project" value="UniProtKB-ARBA"/>
</dbReference>
<dbReference type="GO" id="GO:0006433">
    <property type="term" value="P:prolyl-tRNA aminoacylation"/>
    <property type="evidence" value="ECO:0007669"/>
    <property type="project" value="UniProtKB-UniRule"/>
</dbReference>
<dbReference type="CDD" id="cd04334">
    <property type="entry name" value="ProRS-INS"/>
    <property type="match status" value="1"/>
</dbReference>
<dbReference type="CDD" id="cd00861">
    <property type="entry name" value="ProRS_anticodon_short"/>
    <property type="match status" value="1"/>
</dbReference>
<dbReference type="CDD" id="cd00779">
    <property type="entry name" value="ProRS_core_prok"/>
    <property type="match status" value="1"/>
</dbReference>
<dbReference type="FunFam" id="3.30.930.10:FF:000065">
    <property type="entry name" value="Proline--tRNA ligase"/>
    <property type="match status" value="1"/>
</dbReference>
<dbReference type="FunFam" id="3.30.930.10:FF:000066">
    <property type="entry name" value="Proline--tRNA ligase"/>
    <property type="match status" value="1"/>
</dbReference>
<dbReference type="FunFam" id="3.40.50.800:FF:000011">
    <property type="entry name" value="Proline--tRNA ligase"/>
    <property type="match status" value="1"/>
</dbReference>
<dbReference type="Gene3D" id="3.40.50.800">
    <property type="entry name" value="Anticodon-binding domain"/>
    <property type="match status" value="1"/>
</dbReference>
<dbReference type="Gene3D" id="3.30.930.10">
    <property type="entry name" value="Bira Bifunctional Protein, Domain 2"/>
    <property type="match status" value="2"/>
</dbReference>
<dbReference type="HAMAP" id="MF_01569">
    <property type="entry name" value="Pro_tRNA_synth_type1"/>
    <property type="match status" value="1"/>
</dbReference>
<dbReference type="InterPro" id="IPR002314">
    <property type="entry name" value="aa-tRNA-synt_IIb"/>
</dbReference>
<dbReference type="InterPro" id="IPR006195">
    <property type="entry name" value="aa-tRNA-synth_II"/>
</dbReference>
<dbReference type="InterPro" id="IPR045864">
    <property type="entry name" value="aa-tRNA-synth_II/BPL/LPL"/>
</dbReference>
<dbReference type="InterPro" id="IPR004154">
    <property type="entry name" value="Anticodon-bd"/>
</dbReference>
<dbReference type="InterPro" id="IPR036621">
    <property type="entry name" value="Anticodon-bd_dom_sf"/>
</dbReference>
<dbReference type="InterPro" id="IPR002316">
    <property type="entry name" value="Pro-tRNA-ligase_IIa"/>
</dbReference>
<dbReference type="InterPro" id="IPR004500">
    <property type="entry name" value="Pro-tRNA-synth_IIa_bac-type"/>
</dbReference>
<dbReference type="InterPro" id="IPR023717">
    <property type="entry name" value="Pro-tRNA-Synthase_IIa_type1"/>
</dbReference>
<dbReference type="InterPro" id="IPR050062">
    <property type="entry name" value="Pro-tRNA_synthetase"/>
</dbReference>
<dbReference type="InterPro" id="IPR044140">
    <property type="entry name" value="ProRS_anticodon_short"/>
</dbReference>
<dbReference type="InterPro" id="IPR033730">
    <property type="entry name" value="ProRS_core_prok"/>
</dbReference>
<dbReference type="InterPro" id="IPR036754">
    <property type="entry name" value="YbaK/aa-tRNA-synt-asso_dom_sf"/>
</dbReference>
<dbReference type="InterPro" id="IPR007214">
    <property type="entry name" value="YbaK/aa-tRNA-synth-assoc-dom"/>
</dbReference>
<dbReference type="NCBIfam" id="NF006625">
    <property type="entry name" value="PRK09194.1"/>
    <property type="match status" value="1"/>
</dbReference>
<dbReference type="NCBIfam" id="TIGR00409">
    <property type="entry name" value="proS_fam_II"/>
    <property type="match status" value="1"/>
</dbReference>
<dbReference type="PANTHER" id="PTHR42753">
    <property type="entry name" value="MITOCHONDRIAL RIBOSOME PROTEIN L39/PROLYL-TRNA LIGASE FAMILY MEMBER"/>
    <property type="match status" value="1"/>
</dbReference>
<dbReference type="PANTHER" id="PTHR42753:SF2">
    <property type="entry name" value="PROLINE--TRNA LIGASE"/>
    <property type="match status" value="1"/>
</dbReference>
<dbReference type="Pfam" id="PF03129">
    <property type="entry name" value="HGTP_anticodon"/>
    <property type="match status" value="1"/>
</dbReference>
<dbReference type="Pfam" id="PF00587">
    <property type="entry name" value="tRNA-synt_2b"/>
    <property type="match status" value="1"/>
</dbReference>
<dbReference type="Pfam" id="PF04073">
    <property type="entry name" value="tRNA_edit"/>
    <property type="match status" value="1"/>
</dbReference>
<dbReference type="PIRSF" id="PIRSF001535">
    <property type="entry name" value="ProRS_1"/>
    <property type="match status" value="1"/>
</dbReference>
<dbReference type="PRINTS" id="PR01046">
    <property type="entry name" value="TRNASYNTHPRO"/>
</dbReference>
<dbReference type="SUPFAM" id="SSF52954">
    <property type="entry name" value="Class II aaRS ABD-related"/>
    <property type="match status" value="1"/>
</dbReference>
<dbReference type="SUPFAM" id="SSF55681">
    <property type="entry name" value="Class II aaRS and biotin synthetases"/>
    <property type="match status" value="1"/>
</dbReference>
<dbReference type="SUPFAM" id="SSF55826">
    <property type="entry name" value="YbaK/ProRS associated domain"/>
    <property type="match status" value="1"/>
</dbReference>
<dbReference type="PROSITE" id="PS50862">
    <property type="entry name" value="AA_TRNA_LIGASE_II"/>
    <property type="match status" value="1"/>
</dbReference>
<organism>
    <name type="scientific">Clostridium beijerinckii (strain ATCC 51743 / NCIMB 8052)</name>
    <name type="common">Clostridium acetobutylicum</name>
    <dbReference type="NCBI Taxonomy" id="290402"/>
    <lineage>
        <taxon>Bacteria</taxon>
        <taxon>Bacillati</taxon>
        <taxon>Bacillota</taxon>
        <taxon>Clostridia</taxon>
        <taxon>Eubacteriales</taxon>
        <taxon>Clostridiaceae</taxon>
        <taxon>Clostridium</taxon>
    </lineage>
</organism>
<reference key="1">
    <citation type="submission" date="2007-06" db="EMBL/GenBank/DDBJ databases">
        <title>Complete sequence of Clostridium beijerinckii NCIMB 8052.</title>
        <authorList>
            <consortium name="US DOE Joint Genome Institute"/>
            <person name="Copeland A."/>
            <person name="Lucas S."/>
            <person name="Lapidus A."/>
            <person name="Barry K."/>
            <person name="Detter J.C."/>
            <person name="Glavina del Rio T."/>
            <person name="Hammon N."/>
            <person name="Israni S."/>
            <person name="Dalin E."/>
            <person name="Tice H."/>
            <person name="Pitluck S."/>
            <person name="Sims D."/>
            <person name="Brettin T."/>
            <person name="Bruce D."/>
            <person name="Tapia R."/>
            <person name="Brainard J."/>
            <person name="Schmutz J."/>
            <person name="Larimer F."/>
            <person name="Land M."/>
            <person name="Hauser L."/>
            <person name="Kyrpides N."/>
            <person name="Mikhailova N."/>
            <person name="Bennet G."/>
            <person name="Cann I."/>
            <person name="Chen J.-S."/>
            <person name="Contreras A.L."/>
            <person name="Jones D."/>
            <person name="Kashket E."/>
            <person name="Mitchell W."/>
            <person name="Stoddard S."/>
            <person name="Schwarz W."/>
            <person name="Qureshi N."/>
            <person name="Young M."/>
            <person name="Shi Z."/>
            <person name="Ezeji T."/>
            <person name="White B."/>
            <person name="Blaschek H."/>
            <person name="Richardson P."/>
        </authorList>
    </citation>
    <scope>NUCLEOTIDE SEQUENCE [LARGE SCALE GENOMIC DNA]</scope>
    <source>
        <strain>ATCC 51743 / NCIMB 8052</strain>
    </source>
</reference>
<comment type="function">
    <text evidence="1">Catalyzes the attachment of proline to tRNA(Pro) in a two-step reaction: proline is first activated by ATP to form Pro-AMP and then transferred to the acceptor end of tRNA(Pro). As ProRS can inadvertently accommodate and process non-cognate amino acids such as alanine and cysteine, to avoid such errors it has two additional distinct editing activities against alanine. One activity is designated as 'pretransfer' editing and involves the tRNA(Pro)-independent hydrolysis of activated Ala-AMP. The other activity is designated 'posttransfer' editing and involves deacylation of mischarged Ala-tRNA(Pro). The misacylated Cys-tRNA(Pro) is not edited by ProRS.</text>
</comment>
<comment type="catalytic activity">
    <reaction evidence="1">
        <text>tRNA(Pro) + L-proline + ATP = L-prolyl-tRNA(Pro) + AMP + diphosphate</text>
        <dbReference type="Rhea" id="RHEA:14305"/>
        <dbReference type="Rhea" id="RHEA-COMP:9700"/>
        <dbReference type="Rhea" id="RHEA-COMP:9702"/>
        <dbReference type="ChEBI" id="CHEBI:30616"/>
        <dbReference type="ChEBI" id="CHEBI:33019"/>
        <dbReference type="ChEBI" id="CHEBI:60039"/>
        <dbReference type="ChEBI" id="CHEBI:78442"/>
        <dbReference type="ChEBI" id="CHEBI:78532"/>
        <dbReference type="ChEBI" id="CHEBI:456215"/>
        <dbReference type="EC" id="6.1.1.15"/>
    </reaction>
</comment>
<comment type="subunit">
    <text evidence="1">Homodimer.</text>
</comment>
<comment type="subcellular location">
    <subcellularLocation>
        <location evidence="1">Cytoplasm</location>
    </subcellularLocation>
</comment>
<comment type="domain">
    <text evidence="1">Consists of three domains: the N-terminal catalytic domain, the editing domain and the C-terminal anticodon-binding domain.</text>
</comment>
<comment type="similarity">
    <text evidence="1">Belongs to the class-II aminoacyl-tRNA synthetase family. ProS type 1 subfamily.</text>
</comment>
<feature type="chain" id="PRO_1000087835" description="Proline--tRNA ligase">
    <location>
        <begin position="1"/>
        <end position="570"/>
    </location>
</feature>
<gene>
    <name evidence="1" type="primary">proS</name>
    <name type="ordered locus">Cbei_0130</name>
</gene>